<accession>A4G9U4</accession>
<comment type="function">
    <text evidence="1">DNA-dependent RNA polymerase catalyzes the transcription of DNA into RNA using the four ribonucleoside triphosphates as substrates.</text>
</comment>
<comment type="catalytic activity">
    <reaction evidence="1">
        <text>RNA(n) + a ribonucleoside 5'-triphosphate = RNA(n+1) + diphosphate</text>
        <dbReference type="Rhea" id="RHEA:21248"/>
        <dbReference type="Rhea" id="RHEA-COMP:14527"/>
        <dbReference type="Rhea" id="RHEA-COMP:17342"/>
        <dbReference type="ChEBI" id="CHEBI:33019"/>
        <dbReference type="ChEBI" id="CHEBI:61557"/>
        <dbReference type="ChEBI" id="CHEBI:140395"/>
        <dbReference type="EC" id="2.7.7.6"/>
    </reaction>
</comment>
<comment type="cofactor">
    <cofactor evidence="1">
        <name>Mg(2+)</name>
        <dbReference type="ChEBI" id="CHEBI:18420"/>
    </cofactor>
    <text evidence="1">Binds 1 Mg(2+) ion per subunit.</text>
</comment>
<comment type="cofactor">
    <cofactor evidence="1">
        <name>Zn(2+)</name>
        <dbReference type="ChEBI" id="CHEBI:29105"/>
    </cofactor>
    <text evidence="1">Binds 2 Zn(2+) ions per subunit.</text>
</comment>
<comment type="subunit">
    <text evidence="1">The RNAP catalytic core consists of 2 alpha, 1 beta, 1 beta' and 1 omega subunit. When a sigma factor is associated with the core the holoenzyme is formed, which can initiate transcription.</text>
</comment>
<comment type="similarity">
    <text evidence="1">Belongs to the RNA polymerase beta' chain family.</text>
</comment>
<protein>
    <recommendedName>
        <fullName evidence="1">DNA-directed RNA polymerase subunit beta'</fullName>
        <shortName evidence="1">RNAP subunit beta'</shortName>
        <ecNumber evidence="1">2.7.7.6</ecNumber>
    </recommendedName>
    <alternativeName>
        <fullName evidence="1">RNA polymerase subunit beta'</fullName>
    </alternativeName>
    <alternativeName>
        <fullName evidence="1">Transcriptase subunit beta'</fullName>
    </alternativeName>
</protein>
<proteinExistence type="inferred from homology"/>
<dbReference type="EC" id="2.7.7.6" evidence="1"/>
<dbReference type="EMBL" id="CU207211">
    <property type="protein sequence ID" value="CAL63281.1"/>
    <property type="molecule type" value="Genomic_DNA"/>
</dbReference>
<dbReference type="SMR" id="A4G9U4"/>
<dbReference type="STRING" id="204773.HEAR3172"/>
<dbReference type="KEGG" id="har:HEAR3172"/>
<dbReference type="eggNOG" id="COG0086">
    <property type="taxonomic scope" value="Bacteria"/>
</dbReference>
<dbReference type="HOGENOM" id="CLU_000524_3_1_4"/>
<dbReference type="OrthoDB" id="9815296at2"/>
<dbReference type="Proteomes" id="UP000006697">
    <property type="component" value="Chromosome"/>
</dbReference>
<dbReference type="GO" id="GO:0000428">
    <property type="term" value="C:DNA-directed RNA polymerase complex"/>
    <property type="evidence" value="ECO:0007669"/>
    <property type="project" value="UniProtKB-KW"/>
</dbReference>
<dbReference type="GO" id="GO:0003677">
    <property type="term" value="F:DNA binding"/>
    <property type="evidence" value="ECO:0007669"/>
    <property type="project" value="UniProtKB-UniRule"/>
</dbReference>
<dbReference type="GO" id="GO:0003899">
    <property type="term" value="F:DNA-directed RNA polymerase activity"/>
    <property type="evidence" value="ECO:0007669"/>
    <property type="project" value="UniProtKB-UniRule"/>
</dbReference>
<dbReference type="GO" id="GO:0000287">
    <property type="term" value="F:magnesium ion binding"/>
    <property type="evidence" value="ECO:0007669"/>
    <property type="project" value="UniProtKB-UniRule"/>
</dbReference>
<dbReference type="GO" id="GO:0008270">
    <property type="term" value="F:zinc ion binding"/>
    <property type="evidence" value="ECO:0007669"/>
    <property type="project" value="UniProtKB-UniRule"/>
</dbReference>
<dbReference type="GO" id="GO:0006351">
    <property type="term" value="P:DNA-templated transcription"/>
    <property type="evidence" value="ECO:0007669"/>
    <property type="project" value="UniProtKB-UniRule"/>
</dbReference>
<dbReference type="CDD" id="cd02655">
    <property type="entry name" value="RNAP_beta'_C"/>
    <property type="match status" value="1"/>
</dbReference>
<dbReference type="CDD" id="cd01609">
    <property type="entry name" value="RNAP_beta'_N"/>
    <property type="match status" value="1"/>
</dbReference>
<dbReference type="FunFam" id="1.10.132.30:FF:000003">
    <property type="entry name" value="DNA-directed RNA polymerase subunit beta"/>
    <property type="match status" value="1"/>
</dbReference>
<dbReference type="FunFam" id="1.10.150.390:FF:000002">
    <property type="entry name" value="DNA-directed RNA polymerase subunit beta"/>
    <property type="match status" value="1"/>
</dbReference>
<dbReference type="FunFam" id="4.10.860.120:FF:000001">
    <property type="entry name" value="DNA-directed RNA polymerase subunit beta"/>
    <property type="match status" value="1"/>
</dbReference>
<dbReference type="Gene3D" id="1.10.132.30">
    <property type="match status" value="1"/>
</dbReference>
<dbReference type="Gene3D" id="1.10.150.390">
    <property type="match status" value="1"/>
</dbReference>
<dbReference type="Gene3D" id="1.10.1790.20">
    <property type="match status" value="1"/>
</dbReference>
<dbReference type="Gene3D" id="1.10.40.90">
    <property type="match status" value="1"/>
</dbReference>
<dbReference type="Gene3D" id="2.40.40.20">
    <property type="match status" value="1"/>
</dbReference>
<dbReference type="Gene3D" id="2.40.50.100">
    <property type="match status" value="3"/>
</dbReference>
<dbReference type="Gene3D" id="4.10.860.120">
    <property type="entry name" value="RNA polymerase II, clamp domain"/>
    <property type="match status" value="1"/>
</dbReference>
<dbReference type="Gene3D" id="1.10.274.100">
    <property type="entry name" value="RNA polymerase Rpb1, domain 3"/>
    <property type="match status" value="1"/>
</dbReference>
<dbReference type="HAMAP" id="MF_01322">
    <property type="entry name" value="RNApol_bact_RpoC"/>
    <property type="match status" value="1"/>
</dbReference>
<dbReference type="InterPro" id="IPR045867">
    <property type="entry name" value="DNA-dir_RpoC_beta_prime"/>
</dbReference>
<dbReference type="InterPro" id="IPR012754">
    <property type="entry name" value="DNA-dir_RpoC_beta_prime_bact"/>
</dbReference>
<dbReference type="InterPro" id="IPR000722">
    <property type="entry name" value="RNA_pol_asu"/>
</dbReference>
<dbReference type="InterPro" id="IPR006592">
    <property type="entry name" value="RNA_pol_N"/>
</dbReference>
<dbReference type="InterPro" id="IPR007080">
    <property type="entry name" value="RNA_pol_Rpb1_1"/>
</dbReference>
<dbReference type="InterPro" id="IPR007066">
    <property type="entry name" value="RNA_pol_Rpb1_3"/>
</dbReference>
<dbReference type="InterPro" id="IPR042102">
    <property type="entry name" value="RNA_pol_Rpb1_3_sf"/>
</dbReference>
<dbReference type="InterPro" id="IPR007083">
    <property type="entry name" value="RNA_pol_Rpb1_4"/>
</dbReference>
<dbReference type="InterPro" id="IPR007081">
    <property type="entry name" value="RNA_pol_Rpb1_5"/>
</dbReference>
<dbReference type="InterPro" id="IPR044893">
    <property type="entry name" value="RNA_pol_Rpb1_clamp_domain"/>
</dbReference>
<dbReference type="InterPro" id="IPR038120">
    <property type="entry name" value="Rpb1_funnel_sf"/>
</dbReference>
<dbReference type="NCBIfam" id="TIGR02386">
    <property type="entry name" value="rpoC_TIGR"/>
    <property type="match status" value="1"/>
</dbReference>
<dbReference type="PANTHER" id="PTHR19376">
    <property type="entry name" value="DNA-DIRECTED RNA POLYMERASE"/>
    <property type="match status" value="1"/>
</dbReference>
<dbReference type="PANTHER" id="PTHR19376:SF54">
    <property type="entry name" value="DNA-DIRECTED RNA POLYMERASE SUBUNIT BETA"/>
    <property type="match status" value="1"/>
</dbReference>
<dbReference type="Pfam" id="PF04997">
    <property type="entry name" value="RNA_pol_Rpb1_1"/>
    <property type="match status" value="1"/>
</dbReference>
<dbReference type="Pfam" id="PF00623">
    <property type="entry name" value="RNA_pol_Rpb1_2"/>
    <property type="match status" value="2"/>
</dbReference>
<dbReference type="Pfam" id="PF04983">
    <property type="entry name" value="RNA_pol_Rpb1_3"/>
    <property type="match status" value="1"/>
</dbReference>
<dbReference type="Pfam" id="PF05000">
    <property type="entry name" value="RNA_pol_Rpb1_4"/>
    <property type="match status" value="1"/>
</dbReference>
<dbReference type="Pfam" id="PF04998">
    <property type="entry name" value="RNA_pol_Rpb1_5"/>
    <property type="match status" value="1"/>
</dbReference>
<dbReference type="SMART" id="SM00663">
    <property type="entry name" value="RPOLA_N"/>
    <property type="match status" value="1"/>
</dbReference>
<dbReference type="SUPFAM" id="SSF64484">
    <property type="entry name" value="beta and beta-prime subunits of DNA dependent RNA-polymerase"/>
    <property type="match status" value="1"/>
</dbReference>
<feature type="chain" id="PRO_1000086396" description="DNA-directed RNA polymerase subunit beta'">
    <location>
        <begin position="1"/>
        <end position="1414"/>
    </location>
</feature>
<feature type="region of interest" description="Disordered" evidence="2">
    <location>
        <begin position="1395"/>
        <end position="1414"/>
    </location>
</feature>
<feature type="binding site" evidence="1">
    <location>
        <position position="70"/>
    </location>
    <ligand>
        <name>Zn(2+)</name>
        <dbReference type="ChEBI" id="CHEBI:29105"/>
        <label>1</label>
    </ligand>
</feature>
<feature type="binding site" evidence="1">
    <location>
        <position position="72"/>
    </location>
    <ligand>
        <name>Zn(2+)</name>
        <dbReference type="ChEBI" id="CHEBI:29105"/>
        <label>1</label>
    </ligand>
</feature>
<feature type="binding site" evidence="1">
    <location>
        <position position="85"/>
    </location>
    <ligand>
        <name>Zn(2+)</name>
        <dbReference type="ChEBI" id="CHEBI:29105"/>
        <label>1</label>
    </ligand>
</feature>
<feature type="binding site" evidence="1">
    <location>
        <position position="88"/>
    </location>
    <ligand>
        <name>Zn(2+)</name>
        <dbReference type="ChEBI" id="CHEBI:29105"/>
        <label>1</label>
    </ligand>
</feature>
<feature type="binding site" evidence="1">
    <location>
        <position position="460"/>
    </location>
    <ligand>
        <name>Mg(2+)</name>
        <dbReference type="ChEBI" id="CHEBI:18420"/>
    </ligand>
</feature>
<feature type="binding site" evidence="1">
    <location>
        <position position="462"/>
    </location>
    <ligand>
        <name>Mg(2+)</name>
        <dbReference type="ChEBI" id="CHEBI:18420"/>
    </ligand>
</feature>
<feature type="binding site" evidence="1">
    <location>
        <position position="464"/>
    </location>
    <ligand>
        <name>Mg(2+)</name>
        <dbReference type="ChEBI" id="CHEBI:18420"/>
    </ligand>
</feature>
<feature type="binding site" evidence="1">
    <location>
        <position position="815"/>
    </location>
    <ligand>
        <name>Zn(2+)</name>
        <dbReference type="ChEBI" id="CHEBI:29105"/>
        <label>2</label>
    </ligand>
</feature>
<feature type="binding site" evidence="1">
    <location>
        <position position="889"/>
    </location>
    <ligand>
        <name>Zn(2+)</name>
        <dbReference type="ChEBI" id="CHEBI:29105"/>
        <label>2</label>
    </ligand>
</feature>
<feature type="binding site" evidence="1">
    <location>
        <position position="896"/>
    </location>
    <ligand>
        <name>Zn(2+)</name>
        <dbReference type="ChEBI" id="CHEBI:29105"/>
        <label>2</label>
    </ligand>
</feature>
<feature type="binding site" evidence="1">
    <location>
        <position position="899"/>
    </location>
    <ligand>
        <name>Zn(2+)</name>
        <dbReference type="ChEBI" id="CHEBI:29105"/>
        <label>2</label>
    </ligand>
</feature>
<organism>
    <name type="scientific">Herminiimonas arsenicoxydans</name>
    <dbReference type="NCBI Taxonomy" id="204773"/>
    <lineage>
        <taxon>Bacteria</taxon>
        <taxon>Pseudomonadati</taxon>
        <taxon>Pseudomonadota</taxon>
        <taxon>Betaproteobacteria</taxon>
        <taxon>Burkholderiales</taxon>
        <taxon>Oxalobacteraceae</taxon>
        <taxon>Herminiimonas</taxon>
    </lineage>
</organism>
<evidence type="ECO:0000255" key="1">
    <source>
        <dbReference type="HAMAP-Rule" id="MF_01322"/>
    </source>
</evidence>
<evidence type="ECO:0000256" key="2">
    <source>
        <dbReference type="SAM" id="MobiDB-lite"/>
    </source>
</evidence>
<sequence length="1414" mass="156153">MKALLDLFKQVQQNEQFDAIKIGLASPEKIRSWSYGEVKKPETINYRTFKPERDGLFCAKIFGPIKDYECLCGKYKRLKHRGVICEKCGVEVTLAKVRRERMGHIELASPTAHIWFLKSLPSRLGMVLDMTLRDIERVLYFEAYVVTDPGMTPLKRCQIMSEDDYAAKYEEFGDDFTAFMGAEGIRELLRAIDIDRDAEMLRQELKDSKSEAKIKKYAKRLKVLEAFQRSGIKPDWMIMEVLPVLPPELRPLVPLDGGRFATSDLNDLYRRVINRNNRLKRLMELRAPEIITRNEKRMLQEAVDSLLDNGRRGKAMTGANKRPLKSLAEMIKGKGGRFRQNLLGKRVDYSGRSVIVVGPQLKLHQCGLPKLMALELFKPFIFNKLELMGLATTIKAAKKLVEIQEPVVWDILEDVIREHPVMLNRAPTLHRLGIQAFEPVLIEGKAIQLHPLVCAAFNADFDGDQMAVHVPLSIEAQMEARTLMLASNNILFPSNGEPSIVPSQDIVLGLYYATREAINAKGEGMMFPDVSEVIRAYDNKEVELATRITVRITEYPKNVETGEFEKTVTRYETTVGRAILSEILPKGLPFSVLNRALKKKEISRLINLSFRKCGLRATVVFADQLLQSGFRLATRAGISICVDDMLVPSQKVDIIATAEGEVKQIEQQYSSGLVTAGERYNKVVDIWGKAGDDVGKAMMDQLKVEDVTKRDGTKTTQESFNAIYMMADSGARGSAAQIRQLAGMRGLMAKPDGSIIETPITANFREGLNVLQYFISTHGARKGLADTALKTANSGYLTRRLVDVTQDLVVIEDDCGTSNGASMKALVEGGEVIEALRDRILGRVAANDIVNPETQATLYAAGTLLDEDMVEEIERLGIDEVKVRTPLTCDTRFGLCALCYGRDLGRGSMVNAGEAVGVIAAQSIGEPGTQLTMRTFHIGGAASRAAVASSVEAKSNGTVRFTATMRYVTNGKGGQIVISRSGEVLITDDLGRERERHKVPYGATLIVKDGLVIKAGTALATWDPLTRPIITEYTGTVKFENVEEGSTVARQIDEVTGLSTLVVIDAKRRGSVTKTVRPQVKLLNEQGEEVKIAGTEHAVTIGFQVGALITVKDGQQVTVGEVLARIPTESQKTRDITGGLPRVAELFEARSPKDAGMLAEVTGTVAFGKETKGKQRLEITDMDGNKHEFLITKDKQVLVHDGQVVNKGEMIVDGPADPQDILRLLGIEALARYIVDEVQDVYRLQGVKINDKHIEVIVRQMLRRVQVVDAGDANYIVGEQVERSELLDENDRVIAQGKIPATYENVLLGITKASLSTDSFISAASFQETTRVLTEAAIMGKRDGLRGLKENVIVGRLIPAGTGLAFHRARKEKESWEAEERTALLQSEKAARAAEAEAQFADISSTPDSDTDAS</sequence>
<gene>
    <name evidence="1" type="primary">rpoC</name>
    <name type="ordered locus">HEAR3172</name>
</gene>
<name>RPOC_HERAR</name>
<keyword id="KW-0240">DNA-directed RNA polymerase</keyword>
<keyword id="KW-0460">Magnesium</keyword>
<keyword id="KW-0479">Metal-binding</keyword>
<keyword id="KW-0548">Nucleotidyltransferase</keyword>
<keyword id="KW-1185">Reference proteome</keyword>
<keyword id="KW-0804">Transcription</keyword>
<keyword id="KW-0808">Transferase</keyword>
<keyword id="KW-0862">Zinc</keyword>
<reference key="1">
    <citation type="journal article" date="2007" name="PLoS Genet.">
        <title>A tale of two oxidation states: bacterial colonization of arsenic-rich environments.</title>
        <authorList>
            <person name="Muller D."/>
            <person name="Medigue C."/>
            <person name="Koechler S."/>
            <person name="Barbe V."/>
            <person name="Barakat M."/>
            <person name="Talla E."/>
            <person name="Bonnefoy V."/>
            <person name="Krin E."/>
            <person name="Arsene-Ploetze F."/>
            <person name="Carapito C."/>
            <person name="Chandler M."/>
            <person name="Cournoyer B."/>
            <person name="Cruveiller S."/>
            <person name="Dossat C."/>
            <person name="Duval S."/>
            <person name="Heymann M."/>
            <person name="Leize E."/>
            <person name="Lieutaud A."/>
            <person name="Lievremont D."/>
            <person name="Makita Y."/>
            <person name="Mangenot S."/>
            <person name="Nitschke W."/>
            <person name="Ortet P."/>
            <person name="Perdrial N."/>
            <person name="Schoepp B."/>
            <person name="Siguier P."/>
            <person name="Simeonova D.D."/>
            <person name="Rouy Z."/>
            <person name="Segurens B."/>
            <person name="Turlin E."/>
            <person name="Vallenet D."/>
            <person name="van Dorsselaer A."/>
            <person name="Weiss S."/>
            <person name="Weissenbach J."/>
            <person name="Lett M.-C."/>
            <person name="Danchin A."/>
            <person name="Bertin P.N."/>
        </authorList>
    </citation>
    <scope>NUCLEOTIDE SEQUENCE [LARGE SCALE GENOMIC DNA]</scope>
    <source>
        <strain>ULPAs1</strain>
    </source>
</reference>